<dbReference type="EC" id="6.3.2.2" evidence="1"/>
<dbReference type="EMBL" id="AE017220">
    <property type="protein sequence ID" value="AAX64520.1"/>
    <property type="molecule type" value="Genomic_DNA"/>
</dbReference>
<dbReference type="RefSeq" id="WP_001539396.1">
    <property type="nucleotide sequence ID" value="NC_006905.1"/>
</dbReference>
<dbReference type="SMR" id="Q57RZ1"/>
<dbReference type="KEGG" id="sec:SCH_0614"/>
<dbReference type="HOGENOM" id="CLU_044848_1_1_6"/>
<dbReference type="Proteomes" id="UP000000538">
    <property type="component" value="Chromosome"/>
</dbReference>
<dbReference type="GO" id="GO:0005524">
    <property type="term" value="F:ATP binding"/>
    <property type="evidence" value="ECO:0007669"/>
    <property type="project" value="UniProtKB-KW"/>
</dbReference>
<dbReference type="GO" id="GO:0004357">
    <property type="term" value="F:glutamate-cysteine ligase activity"/>
    <property type="evidence" value="ECO:0007669"/>
    <property type="project" value="UniProtKB-EC"/>
</dbReference>
<dbReference type="GO" id="GO:0042398">
    <property type="term" value="P:modified amino acid biosynthetic process"/>
    <property type="evidence" value="ECO:0007669"/>
    <property type="project" value="InterPro"/>
</dbReference>
<dbReference type="FunFam" id="3.30.590.20:FF:000002">
    <property type="entry name" value="Putative glutamate--cysteine ligase 2"/>
    <property type="match status" value="1"/>
</dbReference>
<dbReference type="Gene3D" id="3.30.590.20">
    <property type="match status" value="1"/>
</dbReference>
<dbReference type="HAMAP" id="MF_01609">
    <property type="entry name" value="Glu_cys_ligase_2"/>
    <property type="match status" value="1"/>
</dbReference>
<dbReference type="InterPro" id="IPR050141">
    <property type="entry name" value="GCL_type2/YbdK_subfam"/>
</dbReference>
<dbReference type="InterPro" id="IPR006336">
    <property type="entry name" value="GCS2"/>
</dbReference>
<dbReference type="InterPro" id="IPR014746">
    <property type="entry name" value="Gln_synth/guanido_kin_cat_dom"/>
</dbReference>
<dbReference type="InterPro" id="IPR011793">
    <property type="entry name" value="YbdK"/>
</dbReference>
<dbReference type="NCBIfam" id="TIGR02050">
    <property type="entry name" value="gshA_cyan_rel"/>
    <property type="match status" value="1"/>
</dbReference>
<dbReference type="NCBIfam" id="NF010040">
    <property type="entry name" value="PRK13516.1"/>
    <property type="match status" value="1"/>
</dbReference>
<dbReference type="PANTHER" id="PTHR36510">
    <property type="entry name" value="GLUTAMATE--CYSTEINE LIGASE 2-RELATED"/>
    <property type="match status" value="1"/>
</dbReference>
<dbReference type="PANTHER" id="PTHR36510:SF1">
    <property type="entry name" value="GLUTAMATE--CYSTEINE LIGASE 2-RELATED"/>
    <property type="match status" value="1"/>
</dbReference>
<dbReference type="Pfam" id="PF04107">
    <property type="entry name" value="GCS2"/>
    <property type="match status" value="1"/>
</dbReference>
<dbReference type="SUPFAM" id="SSF55931">
    <property type="entry name" value="Glutamine synthetase/guanido kinase"/>
    <property type="match status" value="1"/>
</dbReference>
<sequence length="372" mass="41661">MALNDFHVSEPYTLGIELEMQVINPPSYDLSQDSSTLIDAVKSRLTAGEIKHDITESMLEMATGVCRDIDQAAAQLSAMQHVILQAASEHHLGICGGGTHPFQKWQRQEVCDNERYQRTLENFGYLIQQATVFGQHVHVGCANGDDAIYLLHGLSHFVPHFIALSAASPYMQGSDTRFACARLNIFSAFPDNGPMPWVSNWQEFAGLFRRLSYTTMIDSIKDLHWDIRPSPAFGTVEVRVMDTPLTLDHAINMAGLIQATAHWLLTERPFKPQEQDYLLYKFNRFQACRYGLEGVLTDAYTGDRRRLADDTLRLLDNVTPSARKLGADSAIDALRLQVKKGGNEAQYMREFIADGGSLIGLVQKHCEIWAGQ</sequence>
<feature type="chain" id="PRO_0000255813" description="Putative glutamate--cysteine ligase 2">
    <location>
        <begin position="1"/>
        <end position="372"/>
    </location>
</feature>
<protein>
    <recommendedName>
        <fullName evidence="1">Putative glutamate--cysteine ligase 2</fullName>
        <ecNumber evidence="1">6.3.2.2</ecNumber>
    </recommendedName>
    <alternativeName>
        <fullName evidence="1">Gamma-glutamylcysteine synthetase 2</fullName>
        <shortName evidence="1">GCS 2</shortName>
        <shortName evidence="1">Gamma-GCS 2</shortName>
    </alternativeName>
</protein>
<keyword id="KW-0067">ATP-binding</keyword>
<keyword id="KW-0436">Ligase</keyword>
<keyword id="KW-0547">Nucleotide-binding</keyword>
<comment type="function">
    <text evidence="1">ATP-dependent carboxylate-amine ligase which exhibits weak glutamate--cysteine ligase activity.</text>
</comment>
<comment type="catalytic activity">
    <reaction evidence="1">
        <text>L-cysteine + L-glutamate + ATP = gamma-L-glutamyl-L-cysteine + ADP + phosphate + H(+)</text>
        <dbReference type="Rhea" id="RHEA:13285"/>
        <dbReference type="ChEBI" id="CHEBI:15378"/>
        <dbReference type="ChEBI" id="CHEBI:29985"/>
        <dbReference type="ChEBI" id="CHEBI:30616"/>
        <dbReference type="ChEBI" id="CHEBI:35235"/>
        <dbReference type="ChEBI" id="CHEBI:43474"/>
        <dbReference type="ChEBI" id="CHEBI:58173"/>
        <dbReference type="ChEBI" id="CHEBI:456216"/>
        <dbReference type="EC" id="6.3.2.2"/>
    </reaction>
</comment>
<comment type="subunit">
    <text evidence="1">Homodimer.</text>
</comment>
<comment type="similarity">
    <text evidence="1">Belongs to the glutamate--cysteine ligase type 2 family. YbdK subfamily.</text>
</comment>
<reference key="1">
    <citation type="journal article" date="2005" name="Nucleic Acids Res.">
        <title>The genome sequence of Salmonella enterica serovar Choleraesuis, a highly invasive and resistant zoonotic pathogen.</title>
        <authorList>
            <person name="Chiu C.-H."/>
            <person name="Tang P."/>
            <person name="Chu C."/>
            <person name="Hu S."/>
            <person name="Bao Q."/>
            <person name="Yu J."/>
            <person name="Chou Y.-Y."/>
            <person name="Wang H.-S."/>
            <person name="Lee Y.-S."/>
        </authorList>
    </citation>
    <scope>NUCLEOTIDE SEQUENCE [LARGE SCALE GENOMIC DNA]</scope>
    <source>
        <strain>SC-B67</strain>
    </source>
</reference>
<name>GCS2_SALCH</name>
<evidence type="ECO:0000255" key="1">
    <source>
        <dbReference type="HAMAP-Rule" id="MF_01609"/>
    </source>
</evidence>
<organism>
    <name type="scientific">Salmonella choleraesuis (strain SC-B67)</name>
    <dbReference type="NCBI Taxonomy" id="321314"/>
    <lineage>
        <taxon>Bacteria</taxon>
        <taxon>Pseudomonadati</taxon>
        <taxon>Pseudomonadota</taxon>
        <taxon>Gammaproteobacteria</taxon>
        <taxon>Enterobacterales</taxon>
        <taxon>Enterobacteriaceae</taxon>
        <taxon>Salmonella</taxon>
    </lineage>
</organism>
<proteinExistence type="inferred from homology"/>
<gene>
    <name type="primary">ybdK</name>
    <name type="ordered locus">SCH_0614</name>
</gene>
<accession>Q57RZ1</accession>